<comment type="function">
    <text evidence="1">This is one of the proteins that binds to the 5S RNA in the ribosome where it forms part of the central protuberance.</text>
</comment>
<comment type="subunit">
    <text evidence="1">Part of the 50S ribosomal subunit; part of the 5S rRNA/L5/L18/L25 subcomplex. Contacts the 5S rRNA. Binds to the 5S rRNA independently of L5 and L18.</text>
</comment>
<comment type="similarity">
    <text evidence="1">Belongs to the bacterial ribosomal protein bL25 family. CTC subfamily.</text>
</comment>
<accession>C1CZB5</accession>
<proteinExistence type="inferred from homology"/>
<protein>
    <recommendedName>
        <fullName evidence="1">Large ribosomal subunit protein bL25</fullName>
    </recommendedName>
    <alternativeName>
        <fullName evidence="3">50S ribosomal protein L25</fullName>
    </alternativeName>
    <alternativeName>
        <fullName evidence="1">General stress protein CTC</fullName>
    </alternativeName>
</protein>
<name>RL25_DEIDV</name>
<sequence length="239" mass="25399">MELNAKPRKSQEKLAEGLIPAVAYNKDNNISFALDRKAFDRAFRQQSTTGLFDITVEGGETFPALVKTVQMDKRRRTPIHVDFYMVTYGEPIEVSVPVHTTGKSQGEIMGGLVDIVLHNLSIVAPGPRRIPQELTVDVSRLNIGDHITAGDVKLPEGCTLAVAADSVVISVLPPRMTADEAAAETQAAQVAGLVAAGELSEEAAAAVLEGDASIEEIKAEAHAAEGTQAEGSTEEGQQQ</sequence>
<feature type="chain" id="PRO_1000214647" description="Large ribosomal subunit protein bL25">
    <location>
        <begin position="1"/>
        <end position="239"/>
    </location>
</feature>
<feature type="region of interest" description="Disordered" evidence="2">
    <location>
        <begin position="217"/>
        <end position="239"/>
    </location>
</feature>
<feature type="compositionally biased region" description="Polar residues" evidence="2">
    <location>
        <begin position="229"/>
        <end position="239"/>
    </location>
</feature>
<keyword id="KW-1185">Reference proteome</keyword>
<keyword id="KW-0687">Ribonucleoprotein</keyword>
<keyword id="KW-0689">Ribosomal protein</keyword>
<keyword id="KW-0694">RNA-binding</keyword>
<keyword id="KW-0699">rRNA-binding</keyword>
<gene>
    <name evidence="1" type="primary">rplY</name>
    <name evidence="1" type="synonym">ctc</name>
    <name type="ordered locus">Deide_03310</name>
</gene>
<organism>
    <name type="scientific">Deinococcus deserti (strain DSM 17065 / CIP 109153 / LMG 22923 / VCD115)</name>
    <dbReference type="NCBI Taxonomy" id="546414"/>
    <lineage>
        <taxon>Bacteria</taxon>
        <taxon>Thermotogati</taxon>
        <taxon>Deinococcota</taxon>
        <taxon>Deinococci</taxon>
        <taxon>Deinococcales</taxon>
        <taxon>Deinococcaceae</taxon>
        <taxon>Deinococcus</taxon>
    </lineage>
</organism>
<dbReference type="EMBL" id="CP001114">
    <property type="protein sequence ID" value="ACO45153.1"/>
    <property type="molecule type" value="Genomic_DNA"/>
</dbReference>
<dbReference type="RefSeq" id="WP_012692276.1">
    <property type="nucleotide sequence ID" value="NC_012526.1"/>
</dbReference>
<dbReference type="SMR" id="C1CZB5"/>
<dbReference type="STRING" id="546414.Deide_03310"/>
<dbReference type="PaxDb" id="546414-Deide_03310"/>
<dbReference type="KEGG" id="ddr:Deide_03310"/>
<dbReference type="eggNOG" id="COG1825">
    <property type="taxonomic scope" value="Bacteria"/>
</dbReference>
<dbReference type="HOGENOM" id="CLU_075939_2_0_0"/>
<dbReference type="OrthoDB" id="5242980at2"/>
<dbReference type="Proteomes" id="UP000002208">
    <property type="component" value="Chromosome"/>
</dbReference>
<dbReference type="GO" id="GO:0022625">
    <property type="term" value="C:cytosolic large ribosomal subunit"/>
    <property type="evidence" value="ECO:0007669"/>
    <property type="project" value="TreeGrafter"/>
</dbReference>
<dbReference type="GO" id="GO:0008097">
    <property type="term" value="F:5S rRNA binding"/>
    <property type="evidence" value="ECO:0007669"/>
    <property type="project" value="InterPro"/>
</dbReference>
<dbReference type="GO" id="GO:0003735">
    <property type="term" value="F:structural constituent of ribosome"/>
    <property type="evidence" value="ECO:0007669"/>
    <property type="project" value="InterPro"/>
</dbReference>
<dbReference type="GO" id="GO:0006412">
    <property type="term" value="P:translation"/>
    <property type="evidence" value="ECO:0007669"/>
    <property type="project" value="UniProtKB-UniRule"/>
</dbReference>
<dbReference type="CDD" id="cd00495">
    <property type="entry name" value="Ribosomal_L25_TL5_CTC"/>
    <property type="match status" value="1"/>
</dbReference>
<dbReference type="Gene3D" id="2.170.120.20">
    <property type="entry name" value="Ribosomal protein L25, beta domain"/>
    <property type="match status" value="1"/>
</dbReference>
<dbReference type="Gene3D" id="2.40.240.10">
    <property type="entry name" value="Ribosomal Protein L25, Chain P"/>
    <property type="match status" value="1"/>
</dbReference>
<dbReference type="HAMAP" id="MF_01334">
    <property type="entry name" value="Ribosomal_bL25_CTC"/>
    <property type="match status" value="1"/>
</dbReference>
<dbReference type="InterPro" id="IPR020056">
    <property type="entry name" value="Rbsml_bL25/Gln-tRNA_synth_N"/>
</dbReference>
<dbReference type="InterPro" id="IPR011035">
    <property type="entry name" value="Ribosomal_bL25/Gln-tRNA_synth"/>
</dbReference>
<dbReference type="InterPro" id="IPR020057">
    <property type="entry name" value="Ribosomal_bL25_b-dom"/>
</dbReference>
<dbReference type="InterPro" id="IPR037121">
    <property type="entry name" value="Ribosomal_bL25_C"/>
</dbReference>
<dbReference type="InterPro" id="IPR001021">
    <property type="entry name" value="Ribosomal_bL25_long"/>
</dbReference>
<dbReference type="InterPro" id="IPR029751">
    <property type="entry name" value="Ribosomal_L25_dom"/>
</dbReference>
<dbReference type="InterPro" id="IPR020930">
    <property type="entry name" value="Ribosomal_uL5_bac-type"/>
</dbReference>
<dbReference type="NCBIfam" id="TIGR00731">
    <property type="entry name" value="bL25_bact_ctc"/>
    <property type="match status" value="1"/>
</dbReference>
<dbReference type="NCBIfam" id="NF004137">
    <property type="entry name" value="PRK05618.3-3"/>
    <property type="match status" value="1"/>
</dbReference>
<dbReference type="PANTHER" id="PTHR33284">
    <property type="entry name" value="RIBOSOMAL PROTEIN L25/GLN-TRNA SYNTHETASE, ANTI-CODON-BINDING DOMAIN-CONTAINING PROTEIN"/>
    <property type="match status" value="1"/>
</dbReference>
<dbReference type="PANTHER" id="PTHR33284:SF1">
    <property type="entry name" value="RIBOSOMAL PROTEIN L25_GLN-TRNA SYNTHETASE, ANTI-CODON-BINDING DOMAIN-CONTAINING PROTEIN"/>
    <property type="match status" value="1"/>
</dbReference>
<dbReference type="Pfam" id="PF01386">
    <property type="entry name" value="Ribosomal_L25p"/>
    <property type="match status" value="1"/>
</dbReference>
<dbReference type="Pfam" id="PF14693">
    <property type="entry name" value="Ribosomal_TL5_C"/>
    <property type="match status" value="1"/>
</dbReference>
<dbReference type="SUPFAM" id="SSF50715">
    <property type="entry name" value="Ribosomal protein L25-like"/>
    <property type="match status" value="1"/>
</dbReference>
<reference key="1">
    <citation type="journal article" date="2009" name="PLoS Genet.">
        <title>Alliance of proteomics and genomics to unravel the specificities of Sahara bacterium Deinococcus deserti.</title>
        <authorList>
            <person name="de Groot A."/>
            <person name="Dulermo R."/>
            <person name="Ortet P."/>
            <person name="Blanchard L."/>
            <person name="Guerin P."/>
            <person name="Fernandez B."/>
            <person name="Vacherie B."/>
            <person name="Dossat C."/>
            <person name="Jolivet E."/>
            <person name="Siguier P."/>
            <person name="Chandler M."/>
            <person name="Barakat M."/>
            <person name="Dedieu A."/>
            <person name="Barbe V."/>
            <person name="Heulin T."/>
            <person name="Sommer S."/>
            <person name="Achouak W."/>
            <person name="Armengaud J."/>
        </authorList>
    </citation>
    <scope>NUCLEOTIDE SEQUENCE [LARGE SCALE GENOMIC DNA]</scope>
    <source>
        <strain>DSM 17065 / CIP 109153 / LMG 22923 / VCD115</strain>
    </source>
</reference>
<evidence type="ECO:0000255" key="1">
    <source>
        <dbReference type="HAMAP-Rule" id="MF_01334"/>
    </source>
</evidence>
<evidence type="ECO:0000256" key="2">
    <source>
        <dbReference type="SAM" id="MobiDB-lite"/>
    </source>
</evidence>
<evidence type="ECO:0000305" key="3"/>